<protein>
    <recommendedName>
        <fullName evidence="1">Protein PB1-F2</fullName>
    </recommendedName>
</protein>
<keyword id="KW-0053">Apoptosis</keyword>
<keyword id="KW-1035">Host cytoplasm</keyword>
<keyword id="KW-1043">Host membrane</keyword>
<keyword id="KW-1045">Host mitochondrion</keyword>
<keyword id="KW-1046">Host mitochondrion inner membrane</keyword>
<keyword id="KW-1048">Host nucleus</keyword>
<keyword id="KW-0945">Host-virus interaction</keyword>
<keyword id="KW-1090">Inhibition of host innate immune response by virus</keyword>
<keyword id="KW-1097">Inhibition of host MAVS by virus</keyword>
<keyword id="KW-1113">Inhibition of host RLR pathway by virus</keyword>
<keyword id="KW-0472">Membrane</keyword>
<keyword id="KW-1119">Modulation of host cell apoptosis by virus</keyword>
<keyword id="KW-0899">Viral immunoevasion</keyword>
<evidence type="ECO:0000255" key="1">
    <source>
        <dbReference type="HAMAP-Rule" id="MF_04064"/>
    </source>
</evidence>
<evidence type="ECO:0000256" key="2">
    <source>
        <dbReference type="SAM" id="MobiDB-lite"/>
    </source>
</evidence>
<organism>
    <name type="scientific">Influenza A virus (strain A/Chicken/Hong Kong/715.5/2001 H5N1 genotype E)</name>
    <dbReference type="NCBI Taxonomy" id="196434"/>
    <lineage>
        <taxon>Viruses</taxon>
        <taxon>Riboviria</taxon>
        <taxon>Orthornavirae</taxon>
        <taxon>Negarnaviricota</taxon>
        <taxon>Polyploviricotina</taxon>
        <taxon>Insthoviricetes</taxon>
        <taxon>Articulavirales</taxon>
        <taxon>Orthomyxoviridae</taxon>
        <taxon>Alphainfluenzavirus</taxon>
        <taxon>Alphainfluenzavirus influenzae</taxon>
        <taxon>Influenza A virus</taxon>
    </lineage>
</organism>
<organismHost>
    <name type="scientific">Aves</name>
    <dbReference type="NCBI Taxonomy" id="8782"/>
</organismHost>
<organismHost>
    <name type="scientific">Felis catus</name>
    <name type="common">Cat</name>
    <name type="synonym">Felis silvestris catus</name>
    <dbReference type="NCBI Taxonomy" id="9685"/>
</organismHost>
<organismHost>
    <name type="scientific">Homo sapiens</name>
    <name type="common">Human</name>
    <dbReference type="NCBI Taxonomy" id="9606"/>
</organismHost>
<organismHost>
    <name type="scientific">Panthera pardus</name>
    <name type="common">Leopard</name>
    <name type="synonym">Felis pardus</name>
    <dbReference type="NCBI Taxonomy" id="9691"/>
</organismHost>
<organismHost>
    <name type="scientific">Panthera tigris</name>
    <name type="common">Tiger</name>
    <dbReference type="NCBI Taxonomy" id="9694"/>
</organismHost>
<organismHost>
    <name type="scientific">Sus scrofa</name>
    <name type="common">Pig</name>
    <dbReference type="NCBI Taxonomy" id="9823"/>
</organismHost>
<name>PB1F2_I01A3</name>
<reference key="1">
    <citation type="journal article" date="2002" name="Proc. Natl. Acad. Sci. U.S.A.">
        <title>Emergence of multiple genotypes of H5N1 avian influenza viruses in Hong Kong SAR.</title>
        <authorList>
            <person name="Guan Y."/>
            <person name="Peiris J.S.M."/>
            <person name="Lipatov A.S."/>
            <person name="Ellis T.M."/>
            <person name="Dyrting K.C."/>
            <person name="Krauss S."/>
            <person name="Zhang L.J."/>
            <person name="Webster R.G."/>
            <person name="Shortridge K.F."/>
        </authorList>
    </citation>
    <scope>NUCLEOTIDE SEQUENCE [GENOMIC RNA]</scope>
</reference>
<comment type="function">
    <text evidence="1">Plays an important role in promoting lung pathology in both primary viral infection and secondary bacterial infection. Promotes alteration of mitochondrial morphology, dissipation of mitochondrial membrane potential, and cell death. Alternatively, inhibits the production of interferon in the infected cell at the level of host mitochondrial antiviral signaling MAVS. Its level of expression differs greatly depending on which cell type is infected, in a manner that is independent of the levels of expression of other viral proteins. Monocytic cells are more affected than epithelial cells. Seems to disable virus-infected monocytes or other host innate immune cells. During early stage of infection, predisposes the mitochondria to permeability transition through interaction with host SLC25A6/ANT3 and VDAC1. These proteins participate in the formation of the permeability transition pore complex (PTPC) responsible of the release of mitochondrial products that triggers apoptosis.</text>
</comment>
<comment type="subunit">
    <text evidence="1">Oligomer. Interacts with human SLC25A6/ANT3 and VDAC1. Interacts with host MAVS.</text>
</comment>
<comment type="subcellular location">
    <subcellularLocation>
        <location evidence="1">Host mitochondrion inner membrane</location>
    </subcellularLocation>
    <subcellularLocation>
        <location evidence="1">Host nucleus</location>
    </subcellularLocation>
    <subcellularLocation>
        <location evidence="1">Host cytoplasm</location>
        <location evidence="1">Host cytosol</location>
    </subcellularLocation>
    <text evidence="1">Inner mitochondrial membrane in most cells types. Otherwise is detected in the nucleus and cytosol.</text>
</comment>
<comment type="miscellaneous">
    <text>Is not encoded in all strains, and seems to be dispensable for replication.</text>
</comment>
<comment type="similarity">
    <text evidence="1">Belongs to the influenza viruses PB1-F2 family.</text>
</comment>
<dbReference type="EMBL" id="AF509178">
    <property type="status" value="NOT_ANNOTATED_CDS"/>
    <property type="molecule type" value="Genomic_DNA"/>
</dbReference>
<dbReference type="SMR" id="P0C5U9"/>
<dbReference type="GO" id="GO:0044164">
    <property type="term" value="C:host cell cytosol"/>
    <property type="evidence" value="ECO:0007669"/>
    <property type="project" value="UniProtKB-SubCell"/>
</dbReference>
<dbReference type="GO" id="GO:0044192">
    <property type="term" value="C:host cell mitochondrial inner membrane"/>
    <property type="evidence" value="ECO:0007669"/>
    <property type="project" value="UniProtKB-SubCell"/>
</dbReference>
<dbReference type="GO" id="GO:0042025">
    <property type="term" value="C:host cell nucleus"/>
    <property type="evidence" value="ECO:0007669"/>
    <property type="project" value="UniProtKB-SubCell"/>
</dbReference>
<dbReference type="GO" id="GO:0016020">
    <property type="term" value="C:membrane"/>
    <property type="evidence" value="ECO:0007669"/>
    <property type="project" value="UniProtKB-UniRule"/>
</dbReference>
<dbReference type="GO" id="GO:0052150">
    <property type="term" value="P:symbiont-mediated perturbation of host apoptosis"/>
    <property type="evidence" value="ECO:0007669"/>
    <property type="project" value="UniProtKB-KW"/>
</dbReference>
<dbReference type="GO" id="GO:0039545">
    <property type="term" value="P:symbiont-mediated suppression of host cytoplasmic pattern recognition receptor signaling pathway via inhibition of MAVS activity"/>
    <property type="evidence" value="ECO:0007669"/>
    <property type="project" value="UniProtKB-KW"/>
</dbReference>
<dbReference type="HAMAP" id="MF_04064">
    <property type="entry name" value="INFV_PB1F2"/>
    <property type="match status" value="1"/>
</dbReference>
<dbReference type="InterPro" id="IPR021045">
    <property type="entry name" value="Flu_proapoptotic_PB1-F2"/>
</dbReference>
<dbReference type="Pfam" id="PF11986">
    <property type="entry name" value="PB1-F2"/>
    <property type="match status" value="1"/>
</dbReference>
<sequence>MEQEQDTPWTQSTEHINIQKRGNGQRTQRPEHPNSIRLMDHCLRIMSRVGMHRQIVYWKQWLSLKSPTQGSLKTRVLKRWKLFSKQEWIN</sequence>
<feature type="chain" id="PRO_0000311640" description="Protein PB1-F2">
    <location>
        <begin position="1"/>
        <end position="90"/>
    </location>
</feature>
<feature type="region of interest" description="Disordered" evidence="2">
    <location>
        <begin position="1"/>
        <end position="34"/>
    </location>
</feature>
<feature type="region of interest" description="Mitochondrial targeting sequence" evidence="1">
    <location>
        <begin position="65"/>
        <end position="87"/>
    </location>
</feature>
<feature type="compositionally biased region" description="Polar residues" evidence="2">
    <location>
        <begin position="1"/>
        <end position="27"/>
    </location>
</feature>
<feature type="site" description="High pathogenicity" evidence="1">
    <location>
        <position position="66"/>
    </location>
</feature>
<proteinExistence type="inferred from homology"/>
<gene>
    <name evidence="1" type="primary">PB1</name>
</gene>
<accession>P0C5U9</accession>